<accession>Q83ST5</accession>
<accession>Q8Z219</accession>
<protein>
    <recommendedName>
        <fullName evidence="4">Fe(2+) transporter FeoB</fullName>
    </recommendedName>
    <alternativeName>
        <fullName>Ferrous iron transport protein B</fullName>
    </alternativeName>
</protein>
<sequence>MKKLTIGLIGNPNSGKTTLFNQLTGARQRVGNWAGVTVERKEGQFATTDHQVTLVDLPGTYSLTTISSQTSLDEQIACHYILSGDADLLINVVDASNLERNLYLTLQLLELGIPCIVALNMLDIAEKQQVRIDVDALSTRLGCPVVPLVSTRGRGIEALKLAIDRHNANDNVELVHYAQPLLREAGFLADAMAQEMPLQQRRWLGLQMLEGDIYSRAYAGEAAQNLDTSLARLKDEMDDPALHIADARYQCIAAICDVVSNTLTAEPSRFTRAVDKIILNRFLGLPIFLFVMYLMFLLAINIGGALQPLFDAGSVAIFIHGIQWIGYTLHFPDWLTIFLAQGLGGGINTVLPLVPQIGMMYLFLSFLEDSGYMARAAFVMDRLMQALGLPGKSFVPLIVGFGCNVPSVMGARTLDAPRERLMTIMMAPFMSCGARLAIFAVFAAAFFGQNGALAVFSLYVLGIVMAVLTGLMLKHTIMRGEASPFVMELPVYHVPHIKSLIIQTWQRLKGFVLRAGKVIIIVSIFLSAFNSFSLSGKIVDNINDSALASVSRVITPVFKPIGVHEDNWQATVGLFTGAMAKEVVVGTLNTLYTAENIQDEAFNPADFHLGDELLGAVDDTWQSLKDTFSLSVLANPIEASKGDGEMATGAMGVMDQKFGSAAAAYSYLIFVLLYVPCISVMGAIARESSRGWMSFSILWGLNIAYSLATLFYQVTSFSQHPTYSLICILAVIVFNVVVLSLLRRARSRVDIELLATRKSVTSCCSGTAGNCH</sequence>
<name>FEOB_SALTI</name>
<proteinExistence type="inferred from homology"/>
<dbReference type="EMBL" id="AE014613">
    <property type="protein sequence ID" value="AAO71470.1"/>
    <property type="molecule type" value="Genomic_DNA"/>
</dbReference>
<dbReference type="EMBL" id="AL513382">
    <property type="protein sequence ID" value="CAD08108.1"/>
    <property type="molecule type" value="Genomic_DNA"/>
</dbReference>
<dbReference type="RefSeq" id="NP_458398.1">
    <property type="nucleotide sequence ID" value="NC_003198.1"/>
</dbReference>
<dbReference type="RefSeq" id="WP_000736977.1">
    <property type="nucleotide sequence ID" value="NZ_PZMG01000002.1"/>
</dbReference>
<dbReference type="RefSeq" id="WP_000736984.1">
    <property type="nucleotide sequence ID" value="NZ_WSUR01000001.1"/>
</dbReference>
<dbReference type="SMR" id="Q83ST5"/>
<dbReference type="STRING" id="220341.gene:17588121"/>
<dbReference type="KEGG" id="stt:t4000"/>
<dbReference type="KEGG" id="sty:STY4290"/>
<dbReference type="PATRIC" id="fig|220341.7.peg.4384"/>
<dbReference type="eggNOG" id="COG0370">
    <property type="taxonomic scope" value="Bacteria"/>
</dbReference>
<dbReference type="HOGENOM" id="CLU_013350_3_0_6"/>
<dbReference type="OMA" id="YAFAMQC"/>
<dbReference type="OrthoDB" id="9809127at2"/>
<dbReference type="Proteomes" id="UP000000541">
    <property type="component" value="Chromosome"/>
</dbReference>
<dbReference type="Proteomes" id="UP000002670">
    <property type="component" value="Chromosome"/>
</dbReference>
<dbReference type="GO" id="GO:0005886">
    <property type="term" value="C:plasma membrane"/>
    <property type="evidence" value="ECO:0007669"/>
    <property type="project" value="UniProtKB-SubCell"/>
</dbReference>
<dbReference type="GO" id="GO:0015093">
    <property type="term" value="F:ferrous iron transmembrane transporter activity"/>
    <property type="evidence" value="ECO:0007669"/>
    <property type="project" value="InterPro"/>
</dbReference>
<dbReference type="GO" id="GO:0005525">
    <property type="term" value="F:GTP binding"/>
    <property type="evidence" value="ECO:0007669"/>
    <property type="project" value="UniProtKB-KW"/>
</dbReference>
<dbReference type="CDD" id="cd01879">
    <property type="entry name" value="FeoB"/>
    <property type="match status" value="1"/>
</dbReference>
<dbReference type="FunFam" id="3.40.50.300:FF:000426">
    <property type="entry name" value="Ferrous iron transport protein B"/>
    <property type="match status" value="1"/>
</dbReference>
<dbReference type="Gene3D" id="1.10.287.1770">
    <property type="match status" value="1"/>
</dbReference>
<dbReference type="Gene3D" id="3.40.50.300">
    <property type="entry name" value="P-loop containing nucleotide triphosphate hydrolases"/>
    <property type="match status" value="1"/>
</dbReference>
<dbReference type="InterPro" id="IPR003373">
    <property type="entry name" value="Fe2_transport_prot-B"/>
</dbReference>
<dbReference type="InterPro" id="IPR011640">
    <property type="entry name" value="Fe2_transport_prot_B_C"/>
</dbReference>
<dbReference type="InterPro" id="IPR041069">
    <property type="entry name" value="FeoB_Cyto"/>
</dbReference>
<dbReference type="InterPro" id="IPR050860">
    <property type="entry name" value="FeoB_GTPase"/>
</dbReference>
<dbReference type="InterPro" id="IPR030389">
    <property type="entry name" value="G_FEOB_dom"/>
</dbReference>
<dbReference type="InterPro" id="IPR011642">
    <property type="entry name" value="Gate_dom"/>
</dbReference>
<dbReference type="InterPro" id="IPR027417">
    <property type="entry name" value="P-loop_NTPase"/>
</dbReference>
<dbReference type="InterPro" id="IPR005225">
    <property type="entry name" value="Small_GTP-bd"/>
</dbReference>
<dbReference type="NCBIfam" id="TIGR00437">
    <property type="entry name" value="feoB"/>
    <property type="match status" value="1"/>
</dbReference>
<dbReference type="NCBIfam" id="NF007105">
    <property type="entry name" value="PRK09554.1"/>
    <property type="match status" value="1"/>
</dbReference>
<dbReference type="NCBIfam" id="TIGR00231">
    <property type="entry name" value="small_GTP"/>
    <property type="match status" value="1"/>
</dbReference>
<dbReference type="PANTHER" id="PTHR43185:SF1">
    <property type="entry name" value="FE(2+) TRANSPORTER FEOB"/>
    <property type="match status" value="1"/>
</dbReference>
<dbReference type="PANTHER" id="PTHR43185">
    <property type="entry name" value="FERROUS IRON TRANSPORT PROTEIN B"/>
    <property type="match status" value="1"/>
</dbReference>
<dbReference type="Pfam" id="PF07664">
    <property type="entry name" value="FeoB_C"/>
    <property type="match status" value="1"/>
</dbReference>
<dbReference type="Pfam" id="PF17910">
    <property type="entry name" value="FeoB_Cyto"/>
    <property type="match status" value="1"/>
</dbReference>
<dbReference type="Pfam" id="PF02421">
    <property type="entry name" value="FeoB_N"/>
    <property type="match status" value="1"/>
</dbReference>
<dbReference type="Pfam" id="PF07670">
    <property type="entry name" value="Gate"/>
    <property type="match status" value="2"/>
</dbReference>
<dbReference type="SUPFAM" id="SSF52540">
    <property type="entry name" value="P-loop containing nucleoside triphosphate hydrolases"/>
    <property type="match status" value="1"/>
</dbReference>
<dbReference type="PROSITE" id="PS51711">
    <property type="entry name" value="G_FEOB"/>
    <property type="match status" value="1"/>
</dbReference>
<comment type="function">
    <text evidence="1">Probable transporter of a GTP-driven Fe(2+) uptake system.</text>
</comment>
<comment type="subcellular location">
    <subcellularLocation>
        <location evidence="1">Cell inner membrane</location>
        <topology evidence="1">Multi-pass membrane protein</topology>
    </subcellularLocation>
</comment>
<comment type="induction">
    <text evidence="1">Iron uptake is repressed by the global regulator Fur.</text>
</comment>
<comment type="similarity">
    <text evidence="3">Belongs to the TRAFAC class TrmE-Era-EngA-EngB-Septin-like GTPase superfamily. FeoB GTPase (TC 9.A.8) family.</text>
</comment>
<feature type="chain" id="PRO_0000210826" description="Fe(2+) transporter FeoB">
    <location>
        <begin position="1"/>
        <end position="772"/>
    </location>
</feature>
<feature type="transmembrane region" description="Helical" evidence="2">
    <location>
        <begin position="282"/>
        <end position="302"/>
    </location>
</feature>
<feature type="transmembrane region" description="Helical" evidence="2">
    <location>
        <begin position="309"/>
        <end position="329"/>
    </location>
</feature>
<feature type="transmembrane region" description="Helical" evidence="2">
    <location>
        <begin position="344"/>
        <end position="366"/>
    </location>
</feature>
<feature type="transmembrane region" description="Helical" evidence="2">
    <location>
        <begin position="383"/>
        <end position="403"/>
    </location>
</feature>
<feature type="transmembrane region" description="Helical" evidence="2">
    <location>
        <begin position="427"/>
        <end position="447"/>
    </location>
</feature>
<feature type="transmembrane region" description="Helical" evidence="2">
    <location>
        <begin position="453"/>
        <end position="473"/>
    </location>
</feature>
<feature type="transmembrane region" description="Helical" evidence="2">
    <location>
        <begin position="518"/>
        <end position="538"/>
    </location>
</feature>
<feature type="transmembrane region" description="Helical" evidence="2">
    <location>
        <begin position="664"/>
        <end position="684"/>
    </location>
</feature>
<feature type="transmembrane region" description="Helical" evidence="2">
    <location>
        <begin position="691"/>
        <end position="711"/>
    </location>
</feature>
<feature type="transmembrane region" description="Helical" evidence="2">
    <location>
        <begin position="722"/>
        <end position="742"/>
    </location>
</feature>
<feature type="domain" description="FeoB-type G" evidence="3">
    <location>
        <begin position="3"/>
        <end position="169"/>
    </location>
</feature>
<feature type="binding site" evidence="3">
    <location>
        <begin position="10"/>
        <end position="17"/>
    </location>
    <ligand>
        <name>GTP</name>
        <dbReference type="ChEBI" id="CHEBI:37565"/>
        <label>1</label>
    </ligand>
</feature>
<feature type="binding site" evidence="3">
    <location>
        <begin position="35"/>
        <end position="39"/>
    </location>
    <ligand>
        <name>GTP</name>
        <dbReference type="ChEBI" id="CHEBI:37565"/>
        <label>2</label>
    </ligand>
</feature>
<feature type="binding site" evidence="3">
    <location>
        <begin position="56"/>
        <end position="59"/>
    </location>
    <ligand>
        <name>GTP</name>
        <dbReference type="ChEBI" id="CHEBI:37565"/>
        <label>3</label>
    </ligand>
</feature>
<feature type="binding site" evidence="3">
    <location>
        <begin position="120"/>
        <end position="123"/>
    </location>
    <ligand>
        <name>GTP</name>
        <dbReference type="ChEBI" id="CHEBI:37565"/>
    </ligand>
</feature>
<feature type="binding site" evidence="3">
    <location>
        <begin position="149"/>
        <end position="151"/>
    </location>
    <ligand>
        <name>GTP</name>
        <dbReference type="ChEBI" id="CHEBI:37565"/>
    </ligand>
</feature>
<feature type="sequence conflict" description="In Ref. 2; CAD08108." evidence="4" ref="2">
    <original>Y</original>
    <variation>C</variation>
    <location>
        <position position="214"/>
    </location>
</feature>
<gene>
    <name type="primary">feoB</name>
    <name type="ordered locus">STY4290</name>
    <name type="ordered locus">t4000</name>
</gene>
<keyword id="KW-0997">Cell inner membrane</keyword>
<keyword id="KW-1003">Cell membrane</keyword>
<keyword id="KW-0342">GTP-binding</keyword>
<keyword id="KW-0406">Ion transport</keyword>
<keyword id="KW-0408">Iron</keyword>
<keyword id="KW-0410">Iron transport</keyword>
<keyword id="KW-0472">Membrane</keyword>
<keyword id="KW-0547">Nucleotide-binding</keyword>
<keyword id="KW-0812">Transmembrane</keyword>
<keyword id="KW-1133">Transmembrane helix</keyword>
<keyword id="KW-0813">Transport</keyword>
<evidence type="ECO:0000250" key="1">
    <source>
        <dbReference type="UniProtKB" id="P33650"/>
    </source>
</evidence>
<evidence type="ECO:0000255" key="2"/>
<evidence type="ECO:0000255" key="3">
    <source>
        <dbReference type="PROSITE-ProRule" id="PRU01048"/>
    </source>
</evidence>
<evidence type="ECO:0000305" key="4"/>
<organism>
    <name type="scientific">Salmonella typhi</name>
    <dbReference type="NCBI Taxonomy" id="90370"/>
    <lineage>
        <taxon>Bacteria</taxon>
        <taxon>Pseudomonadati</taxon>
        <taxon>Pseudomonadota</taxon>
        <taxon>Gammaproteobacteria</taxon>
        <taxon>Enterobacterales</taxon>
        <taxon>Enterobacteriaceae</taxon>
        <taxon>Salmonella</taxon>
    </lineage>
</organism>
<reference key="1">
    <citation type="journal article" date="2003" name="J. Bacteriol.">
        <title>Comparative genomics of Salmonella enterica serovar Typhi strains Ty2 and CT18.</title>
        <authorList>
            <person name="Deng W."/>
            <person name="Liou S.-R."/>
            <person name="Plunkett G. III"/>
            <person name="Mayhew G.F."/>
            <person name="Rose D.J."/>
            <person name="Burland V."/>
            <person name="Kodoyianni V."/>
            <person name="Schwartz D.C."/>
            <person name="Blattner F.R."/>
        </authorList>
    </citation>
    <scope>NUCLEOTIDE SEQUENCE [LARGE SCALE GENOMIC DNA]</scope>
    <source>
        <strain>ATCC 700931 / Ty2</strain>
    </source>
</reference>
<reference key="2">
    <citation type="journal article" date="2001" name="Nature">
        <title>Complete genome sequence of a multiple drug resistant Salmonella enterica serovar Typhi CT18.</title>
        <authorList>
            <person name="Parkhill J."/>
            <person name="Dougan G."/>
            <person name="James K.D."/>
            <person name="Thomson N.R."/>
            <person name="Pickard D."/>
            <person name="Wain J."/>
            <person name="Churcher C.M."/>
            <person name="Mungall K.L."/>
            <person name="Bentley S.D."/>
            <person name="Holden M.T.G."/>
            <person name="Sebaihia M."/>
            <person name="Baker S."/>
            <person name="Basham D."/>
            <person name="Brooks K."/>
            <person name="Chillingworth T."/>
            <person name="Connerton P."/>
            <person name="Cronin A."/>
            <person name="Davis P."/>
            <person name="Davies R.M."/>
            <person name="Dowd L."/>
            <person name="White N."/>
            <person name="Farrar J."/>
            <person name="Feltwell T."/>
            <person name="Hamlin N."/>
            <person name="Haque A."/>
            <person name="Hien T.T."/>
            <person name="Holroyd S."/>
            <person name="Jagels K."/>
            <person name="Krogh A."/>
            <person name="Larsen T.S."/>
            <person name="Leather S."/>
            <person name="Moule S."/>
            <person name="O'Gaora P."/>
            <person name="Parry C."/>
            <person name="Quail M.A."/>
            <person name="Rutherford K.M."/>
            <person name="Simmonds M."/>
            <person name="Skelton J."/>
            <person name="Stevens K."/>
            <person name="Whitehead S."/>
            <person name="Barrell B.G."/>
        </authorList>
    </citation>
    <scope>NUCLEOTIDE SEQUENCE [LARGE SCALE GENOMIC DNA]</scope>
    <source>
        <strain>CT18</strain>
    </source>
</reference>